<gene>
    <name type="primary">psaI</name>
</gene>
<organism>
    <name type="scientific">Spinacia oleracea</name>
    <name type="common">Spinach</name>
    <dbReference type="NCBI Taxonomy" id="3562"/>
    <lineage>
        <taxon>Eukaryota</taxon>
        <taxon>Viridiplantae</taxon>
        <taxon>Streptophyta</taxon>
        <taxon>Embryophyta</taxon>
        <taxon>Tracheophyta</taxon>
        <taxon>Spermatophyta</taxon>
        <taxon>Magnoliopsida</taxon>
        <taxon>eudicotyledons</taxon>
        <taxon>Gunneridae</taxon>
        <taxon>Pentapetalae</taxon>
        <taxon>Caryophyllales</taxon>
        <taxon>Chenopodiaceae</taxon>
        <taxon>Chenopodioideae</taxon>
        <taxon>Anserineae</taxon>
        <taxon>Spinacia</taxon>
    </lineage>
</organism>
<evidence type="ECO:0000250" key="1"/>
<evidence type="ECO:0000255" key="2"/>
<evidence type="ECO:0000305" key="3"/>
<comment type="function">
    <text>May help in the organization of the PsaL subunit.</text>
</comment>
<comment type="subcellular location">
    <subcellularLocation>
        <location evidence="1">Plastid</location>
        <location evidence="1">Chloroplast thylakoid membrane</location>
        <topology evidence="1">Single-pass membrane protein</topology>
    </subcellularLocation>
</comment>
<comment type="similarity">
    <text evidence="3">Belongs to the PsaI family.</text>
</comment>
<feature type="chain" id="PRO_0000194678" description="Photosystem I reaction center subunit VIII">
    <location>
        <begin position="1"/>
        <end position="33"/>
    </location>
</feature>
<feature type="transmembrane region" description="Helical" evidence="2">
    <location>
        <begin position="6"/>
        <end position="26"/>
    </location>
</feature>
<reference key="1">
    <citation type="journal article" date="2001" name="Plant Mol. Biol.">
        <title>The plastid chromosome of spinach (Spinacia oleracea): complete nucleotide sequence and gene organization.</title>
        <authorList>
            <person name="Schmitz-Linneweber C."/>
            <person name="Maier R.M."/>
            <person name="Alcaraz J.-P."/>
            <person name="Cottet A."/>
            <person name="Herrmann R.G."/>
            <person name="Mache R."/>
        </authorList>
    </citation>
    <scope>NUCLEOTIDE SEQUENCE [LARGE SCALE GENOMIC DNA]</scope>
    <source>
        <strain>cv. Geant d'hiver</strain>
        <strain>cv. Monatol</strain>
    </source>
</reference>
<reference key="2">
    <citation type="journal article" date="1990" name="FEBS Lett.">
        <title>Polypeptide composition of higher plant photosystem I complex. Identification of psaI, psaJ and psaK gene products.</title>
        <authorList>
            <person name="Ikeuchi M."/>
            <person name="Hirano A."/>
            <person name="Hiyama T."/>
            <person name="Inoue Y."/>
        </authorList>
    </citation>
    <scope>PROTEIN SEQUENCE OF 1-18</scope>
</reference>
<geneLocation type="chloroplast"/>
<name>PSAI_SPIOL</name>
<dbReference type="EMBL" id="AJ400848">
    <property type="protein sequence ID" value="CAB88739.1"/>
    <property type="molecule type" value="Genomic_DNA"/>
</dbReference>
<dbReference type="PIR" id="S09731">
    <property type="entry name" value="S09731"/>
</dbReference>
<dbReference type="RefSeq" id="NP_054946.1">
    <property type="nucleotide sequence ID" value="NC_002202.1"/>
</dbReference>
<dbReference type="PDB" id="9GRX">
    <property type="method" value="EM"/>
    <property type="resolution" value="3.19 A"/>
    <property type="chains" value="i=1-31"/>
</dbReference>
<dbReference type="PDBsum" id="9GRX"/>
<dbReference type="EMDB" id="EMD-51527"/>
<dbReference type="SMR" id="P17228"/>
<dbReference type="FunCoup" id="P17228">
    <property type="interactions" value="20"/>
</dbReference>
<dbReference type="STRING" id="3562.P17228"/>
<dbReference type="GeneID" id="2715605"/>
<dbReference type="KEGG" id="soe:2715605"/>
<dbReference type="InParanoid" id="P17228"/>
<dbReference type="OrthoDB" id="970998at2759"/>
<dbReference type="Proteomes" id="UP001155700">
    <property type="component" value="Chloroplast Pltd"/>
</dbReference>
<dbReference type="GO" id="GO:0009535">
    <property type="term" value="C:chloroplast thylakoid membrane"/>
    <property type="evidence" value="ECO:0007669"/>
    <property type="project" value="UniProtKB-SubCell"/>
</dbReference>
<dbReference type="GO" id="GO:0009522">
    <property type="term" value="C:photosystem I"/>
    <property type="evidence" value="ECO:0007669"/>
    <property type="project" value="UniProtKB-KW"/>
</dbReference>
<dbReference type="GO" id="GO:0015979">
    <property type="term" value="P:photosynthesis"/>
    <property type="evidence" value="ECO:0007669"/>
    <property type="project" value="UniProtKB-UniRule"/>
</dbReference>
<dbReference type="HAMAP" id="MF_00431">
    <property type="entry name" value="PSI_PsaI"/>
    <property type="match status" value="1"/>
</dbReference>
<dbReference type="InterPro" id="IPR001302">
    <property type="entry name" value="PSI_PsaI"/>
</dbReference>
<dbReference type="InterPro" id="IPR036357">
    <property type="entry name" value="PSI_PsaI_sf"/>
</dbReference>
<dbReference type="NCBIfam" id="TIGR03052">
    <property type="entry name" value="PS_I_psaI"/>
    <property type="match status" value="1"/>
</dbReference>
<dbReference type="PANTHER" id="PTHR35775">
    <property type="match status" value="1"/>
</dbReference>
<dbReference type="PANTHER" id="PTHR35775:SF2">
    <property type="entry name" value="PHOTOSYSTEM I REACTION CENTER SUBUNIT VIII"/>
    <property type="match status" value="1"/>
</dbReference>
<dbReference type="Pfam" id="PF00796">
    <property type="entry name" value="PSI_8"/>
    <property type="match status" value="1"/>
</dbReference>
<dbReference type="SUPFAM" id="SSF81540">
    <property type="entry name" value="Subunit VIII of photosystem I reaction centre, PsaI"/>
    <property type="match status" value="1"/>
</dbReference>
<keyword id="KW-0002">3D-structure</keyword>
<keyword id="KW-0150">Chloroplast</keyword>
<keyword id="KW-0903">Direct protein sequencing</keyword>
<keyword id="KW-0472">Membrane</keyword>
<keyword id="KW-0602">Photosynthesis</keyword>
<keyword id="KW-0603">Photosystem I</keyword>
<keyword id="KW-0934">Plastid</keyword>
<keyword id="KW-1185">Reference proteome</keyword>
<keyword id="KW-0793">Thylakoid</keyword>
<keyword id="KW-0812">Transmembrane</keyword>
<keyword id="KW-1133">Transmembrane helix</keyword>
<proteinExistence type="evidence at protein level"/>
<accession>P17228</accession>
<accession>Q9M3L6</accession>
<protein>
    <recommendedName>
        <fullName>Photosystem I reaction center subunit VIII</fullName>
        <shortName>PSI-I</shortName>
    </recommendedName>
</protein>
<sequence>MNFPSIFVPLVGLVFPAIAMASLFLYVQKNKIV</sequence>